<comment type="function">
    <text evidence="4 6 7 8 9 10 11 12">Constitutively potentiates the superoxide-generating activity of NOX1 and NOX3 and is required for the biogenesis of otoconia/otolith, which are crystalline structures of the inner ear involved in the perception of gravity. Isoform 3 is more potent than isoform 1 in activating NOX3. Together with NOXA1, may also substitute to NCF1/p47phox and NCF2/p67phox in supporting the phagocyte NOX2/gp91phox superoxide-generating activity.</text>
</comment>
<comment type="subunit">
    <text evidence="5 10 11 13">Interacts with NOX1, NOXA1, CYBA/p22phox and NCF2/p67phox. Interacts with SH3PXD2A and SH3PXD2B.</text>
</comment>
<comment type="interaction">
    <interactant intactId="EBI-7130806">
        <id>Q8NFA2</id>
    </interactant>
    <interactant intactId="EBI-986058">
        <id>P13498</id>
        <label>CYBA</label>
    </interactant>
    <organismsDiffer>false</organismsDiffer>
    <experiments>4</experiments>
</comment>
<comment type="interaction">
    <interactant intactId="EBI-7130806">
        <id>Q8NFA2</id>
    </interactant>
    <interactant intactId="EBI-949814">
        <id>Q86UR1</id>
        <label>NOXA1</label>
    </interactant>
    <organismsDiffer>false</organismsDiffer>
    <experiments>2</experiments>
</comment>
<comment type="interaction">
    <interactant intactId="EBI-20557410">
        <id>Q8NFA2-3</id>
    </interactant>
    <interactant intactId="EBI-986058">
        <id>P13498</id>
        <label>CYBA</label>
    </interactant>
    <organismsDiffer>false</organismsDiffer>
    <experiments>3</experiments>
</comment>
<comment type="interaction">
    <interactant intactId="EBI-20557410">
        <id>Q8NFA2-3</id>
    </interactant>
    <interactant intactId="EBI-949814">
        <id>Q86UR1</id>
        <label>NOXA1</label>
    </interactant>
    <organismsDiffer>false</organismsDiffer>
    <experiments>5</experiments>
</comment>
<comment type="subcellular location">
    <molecule>Isoform 3</molecule>
    <subcellularLocation>
        <location evidence="5">Cell membrane</location>
        <topology evidence="5">Peripheral membrane protein</topology>
        <orientation evidence="5">Cytoplasmic side</orientation>
    </subcellularLocation>
    <text>Isoform 3 associates with the plasma membrane in a lipid-dependent manner (PubMed:12716910).</text>
</comment>
<comment type="alternative products">
    <event type="alternative splicing"/>
    <isoform>
        <id>Q8NFA2-1</id>
        <name>1</name>
        <name>NOXO1gamma</name>
        <sequence type="displayed"/>
    </isoform>
    <isoform>
        <id>Q8NFA2-2</id>
        <name>2</name>
        <name>NOXO1delta</name>
        <sequence type="described" ref="VSP_017560"/>
    </isoform>
    <isoform>
        <id>Q8NFA2-3</id>
        <name>3</name>
        <name>NOXO1beta</name>
        <sequence type="described" ref="VSP_017561"/>
    </isoform>
    <isoform>
        <id>Q8NFA2-4</id>
        <name>4</name>
        <name>NOXO1alpha</name>
        <sequence type="described" ref="VSP_017560 VSP_017561"/>
    </isoform>
</comment>
<comment type="tissue specificity">
    <text evidence="4 7 9">Expressed in testis, small and large intestines, liver, kidney and pancreas. Isoform 3 is mainly expressed in colon. Isoform 1 is preferentially expressed in testis.</text>
</comment>
<comment type="developmental stage">
    <text evidence="9">Isoform 3 is expressed in fetal liver.</text>
</comment>
<comment type="domain">
    <text>The PX domain mediates lipid-binding, localization to the plasma membrane and is required for NOX1 activation.</text>
</comment>
<comment type="domain">
    <text>The SH3 domains mediate interaction with CYBA/p22phox. Also mediates intramolecular interaction with the proline-rich region.</text>
</comment>
<gene>
    <name type="primary">NOXO1</name>
    <name type="synonym">P41NOX</name>
    <name type="synonym">SH3PXD5</name>
</gene>
<organism>
    <name type="scientific">Homo sapiens</name>
    <name type="common">Human</name>
    <dbReference type="NCBI Taxonomy" id="9606"/>
    <lineage>
        <taxon>Eukaryota</taxon>
        <taxon>Metazoa</taxon>
        <taxon>Chordata</taxon>
        <taxon>Craniata</taxon>
        <taxon>Vertebrata</taxon>
        <taxon>Euteleostomi</taxon>
        <taxon>Mammalia</taxon>
        <taxon>Eutheria</taxon>
        <taxon>Euarchontoglires</taxon>
        <taxon>Primates</taxon>
        <taxon>Haplorrhini</taxon>
        <taxon>Catarrhini</taxon>
        <taxon>Hominidae</taxon>
        <taxon>Homo</taxon>
    </lineage>
</organism>
<name>NOXO1_HUMAN</name>
<evidence type="ECO:0000255" key="1">
    <source>
        <dbReference type="PROSITE-ProRule" id="PRU00147"/>
    </source>
</evidence>
<evidence type="ECO:0000255" key="2">
    <source>
        <dbReference type="PROSITE-ProRule" id="PRU00192"/>
    </source>
</evidence>
<evidence type="ECO:0000256" key="3">
    <source>
        <dbReference type="SAM" id="MobiDB-lite"/>
    </source>
</evidence>
<evidence type="ECO:0000269" key="4">
    <source>
    </source>
</evidence>
<evidence type="ECO:0000269" key="5">
    <source>
    </source>
</evidence>
<evidence type="ECO:0000269" key="6">
    <source>
    </source>
</evidence>
<evidence type="ECO:0000269" key="7">
    <source>
    </source>
</evidence>
<evidence type="ECO:0000269" key="8">
    <source>
    </source>
</evidence>
<evidence type="ECO:0000269" key="9">
    <source>
    </source>
</evidence>
<evidence type="ECO:0000269" key="10">
    <source>
    </source>
</evidence>
<evidence type="ECO:0000269" key="11">
    <source>
    </source>
</evidence>
<evidence type="ECO:0000269" key="12">
    <source>
    </source>
</evidence>
<evidence type="ECO:0000269" key="13">
    <source>
    </source>
</evidence>
<evidence type="ECO:0000303" key="14">
    <source>
    </source>
</evidence>
<evidence type="ECO:0000303" key="15">
    <source>
    </source>
</evidence>
<evidence type="ECO:0000303" key="16">
    <source>
    </source>
</evidence>
<evidence type="ECO:0000303" key="17">
    <source>
    </source>
</evidence>
<evidence type="ECO:0000303" key="18">
    <source>
    </source>
</evidence>
<evidence type="ECO:0000303" key="19">
    <source>
    </source>
</evidence>
<evidence type="ECO:0007829" key="20">
    <source>
        <dbReference type="PDB" id="2L73"/>
    </source>
</evidence>
<protein>
    <recommendedName>
        <fullName>NADPH oxidase organizer 1</fullName>
    </recommendedName>
    <alternativeName>
        <fullName>NADPH oxidase regulatory protein</fullName>
    </alternativeName>
    <alternativeName>
        <fullName>Nox organizer 1</fullName>
    </alternativeName>
    <alternativeName>
        <fullName>Nox-organizing protein 1</fullName>
    </alternativeName>
    <alternativeName>
        <fullName>SH3 and PX domain-containing protein 5</fullName>
    </alternativeName>
</protein>
<reference key="1">
    <citation type="journal article" date="2003" name="J. Biol. Chem.">
        <title>Two novel proteins activate superoxide generation by the NADPH oxidase NOX1.</title>
        <authorList>
            <person name="Banfi B."/>
            <person name="Clark R.A."/>
            <person name="Steger K."/>
            <person name="Krause K.-H."/>
        </authorList>
    </citation>
    <scope>NUCLEOTIDE SEQUENCE [MRNA] (ISOFORM 3)</scope>
</reference>
<reference key="2">
    <citation type="journal article" date="2003" name="J. Biol. Chem.">
        <title>Proteins homologous to p47phox and p67phox support superoxide production by NAD(P)H oxidase 1 in colon epithelial cells.</title>
        <authorList>
            <person name="Geiszt M."/>
            <person name="Lekstrom K."/>
            <person name="Witta J."/>
            <person name="Leto T.L."/>
        </authorList>
    </citation>
    <scope>NUCLEOTIDE SEQUENCE [MRNA] (ISOFORM 4)</scope>
    <scope>FUNCTION</scope>
    <scope>TISSUE SPECIFICITY</scope>
    <source>
        <tissue>Colon</tissue>
    </source>
</reference>
<reference key="3">
    <citation type="journal article" date="2003" name="J. Biol. Chem.">
        <title>Novel human homologues of p47phox and p67phox participate in activation of superoxide-producing NADPH oxidases.</title>
        <authorList>
            <person name="Takeya R."/>
            <person name="Ueno N."/>
            <person name="Kami K."/>
            <person name="Taura M."/>
            <person name="Kohjima M."/>
            <person name="Izaki T."/>
            <person name="Nunoi H."/>
            <person name="Sumimoto H."/>
        </authorList>
    </citation>
    <scope>NUCLEOTIDE SEQUENCE [MRNA] (ISOFORM 3)</scope>
    <scope>INTERACTION WITH NOXA1; CYBA AND NCF2</scope>
    <scope>DOMAIN</scope>
</reference>
<reference key="4">
    <citation type="journal article" date="2004" name="J. Biol. Chem.">
        <title>NOXO1, regulation of lipid binding, localization, and activation of Nox1 by the Phox homology (PX) domain.</title>
        <authorList>
            <person name="Cheng G."/>
            <person name="Lambeth J.D."/>
        </authorList>
    </citation>
    <scope>NUCLEOTIDE SEQUENCE [MRNA] (ISOFORM 3)</scope>
    <scope>FUNCTION</scope>
    <scope>MUTAGENESIS OF ARG-40</scope>
    <scope>DOMAIN</scope>
    <scope>SUBCELLULAR LOCATION</scope>
    <source>
        <tissue>Colon</tissue>
    </source>
</reference>
<reference key="5">
    <citation type="journal article" date="2005" name="Gene">
        <title>Alternative mRNA splice forms of NOXO1: differential tissue expression and regulation of Nox1 and Nox3.</title>
        <authorList>
            <person name="Cheng G."/>
            <person name="Lambeth J.D."/>
        </authorList>
    </citation>
    <scope>NUCLEOTIDE SEQUENCE [MRNA] (ISOFORMS 1; 2 AND 4)</scope>
    <scope>FUNCTION</scope>
    <scope>TISSUE SPECIFICITY</scope>
    <scope>DEVELOPMENTAL STAGE</scope>
    <source>
        <tissue>Colon</tissue>
        <tissue>Testis</tissue>
    </source>
</reference>
<reference key="6">
    <citation type="journal article" date="2004" name="Genome Res.">
        <title>The status, quality, and expansion of the NIH full-length cDNA project: the Mammalian Gene Collection (MGC).</title>
        <authorList>
            <consortium name="The MGC Project Team"/>
        </authorList>
    </citation>
    <scope>NUCLEOTIDE SEQUENCE [LARGE SCALE MRNA] (ISOFORM 4)</scope>
    <source>
        <tissue>Colon</tissue>
    </source>
</reference>
<reference key="7">
    <citation type="journal article" date="2004" name="J. Biol. Chem.">
        <title>NOX3, a superoxide-generating NADPH oxidase of the inner ear.</title>
        <authorList>
            <person name="Banfi B."/>
            <person name="Malgrange B."/>
            <person name="Knisz J."/>
            <person name="Steger K."/>
            <person name="Dubois-Dauphin M."/>
            <person name="Krause K.-H."/>
        </authorList>
    </citation>
    <scope>FUNCTION</scope>
    <scope>TISSUE SPECIFICITY</scope>
</reference>
<reference key="8">
    <citation type="journal article" date="2005" name="J. Biol. Chem.">
        <title>The NADPH oxidase Nox3 constitutively produces superoxide in a p22phox-dependent manner: its regulation by oxidase organizers and activators.</title>
        <authorList>
            <person name="Ueno N."/>
            <person name="Takeya R."/>
            <person name="Miyano K."/>
            <person name="Kikuchi H."/>
            <person name="Sumimoto H."/>
        </authorList>
    </citation>
    <scope>FUNCTION</scope>
    <scope>MUTAGENESIS OF TRP-202</scope>
</reference>
<reference key="9">
    <citation type="journal article" date="2006" name="Biochem. Biophys. Res. Commun.">
        <title>Molecular interaction of NADPH oxidase 1 with betaPix and Nox Organizer 1.</title>
        <authorList>
            <person name="Park H.S."/>
            <person name="Park D."/>
            <person name="Bae Y.S."/>
        </authorList>
    </citation>
    <scope>FUNCTION</scope>
    <scope>INTERACTION WITH NOX1</scope>
</reference>
<reference key="10">
    <citation type="journal article" date="2007" name="Biochem. Biophys. Res. Commun.">
        <title>Interaction between the SH3 domains and C-terminal proline-rich region in NADPH oxidase organizer 1 (Noxo1).</title>
        <authorList>
            <person name="Yamamoto A."/>
            <person name="Kami K."/>
            <person name="Takeya R."/>
            <person name="Sumimoto H."/>
        </authorList>
    </citation>
    <scope>FUNCTION</scope>
    <scope>INTERACTION WITH CYBA AND NOXA1</scope>
    <scope>MUTAGENESIS OF TRP-202; TRP-274; PRO-332 AND ARG-334</scope>
</reference>
<reference key="11">
    <citation type="journal article" date="2009" name="Sci. Signal.">
        <title>Novel p47(phox)-related organizers regulate localized NADPH oxidase 1 (Nox1) activity.</title>
        <authorList>
            <person name="Gianni D."/>
            <person name="Diaz B."/>
            <person name="Taulet N."/>
            <person name="Fowler B."/>
            <person name="Courtneidge S.A."/>
            <person name="Bokoch G.M."/>
        </authorList>
    </citation>
    <scope>FUNCTION</scope>
</reference>
<reference key="12">
    <citation type="journal article" date="2011" name="Eur. J. Cell Biol.">
        <title>Direct interaction between Tks proteins and the N-terminal proline-rich region (PRR) of NoxA1 mediates Nox1-dependent ROS generation.</title>
        <authorList>
            <person name="Gianni D."/>
            <person name="Dermardirossian C."/>
            <person name="Bokoch G.M."/>
        </authorList>
    </citation>
    <scope>INTERACTION WITH NOXA1; SH3PXD2A AND SH3PXD2B</scope>
</reference>
<feature type="chain" id="PRO_0000227594" description="NADPH oxidase organizer 1">
    <location>
        <begin position="1"/>
        <end position="376"/>
    </location>
</feature>
<feature type="domain" description="PX" evidence="1">
    <location>
        <begin position="1"/>
        <end position="131"/>
    </location>
</feature>
<feature type="domain" description="SH3 1" evidence="2">
    <location>
        <begin position="163"/>
        <end position="225"/>
    </location>
</feature>
<feature type="domain" description="SH3 2" evidence="2">
    <location>
        <begin position="237"/>
        <end position="296"/>
    </location>
</feature>
<feature type="region of interest" description="Disordered" evidence="3">
    <location>
        <begin position="302"/>
        <end position="376"/>
    </location>
</feature>
<feature type="region of interest" description="Proline-rich region; mediates mutually exclusive interactions with itself and NOXA1">
    <location>
        <begin position="328"/>
        <end position="337"/>
    </location>
</feature>
<feature type="compositionally biased region" description="Pro residues" evidence="3">
    <location>
        <begin position="326"/>
        <end position="335"/>
    </location>
</feature>
<feature type="splice variant" id="VSP_017560" description="In isoform 2 and isoform 4." evidence="15 18 19">
    <location>
        <position position="49"/>
    </location>
</feature>
<feature type="splice variant" id="VSP_017561" description="In isoform 3 and isoform 4." evidence="14 15 16 17 18 19">
    <location>
        <begin position="74"/>
        <end position="78"/>
    </location>
</feature>
<feature type="mutagenesis site" description="Loss of ability to activate NOX1 associated with loss of lipid-binding and plasma membrane localization." evidence="6">
    <original>R</original>
    <variation>Q</variation>
    <location>
        <position position="40"/>
    </location>
</feature>
<feature type="mutagenesis site" description="Loss of ability to activate NOX3 and interact with CYBA. Induces interaction with NOXA1 in vitro." evidence="8 11">
    <original>W</original>
    <variation>R</variation>
    <location>
        <position position="202"/>
    </location>
</feature>
<feature type="mutagenesis site" description="Induces interaction with NOXA1 in vitro." evidence="11">
    <original>W</original>
    <variation>R</variation>
    <location>
        <position position="274"/>
    </location>
</feature>
<feature type="mutagenesis site" description="Loss of intramolecular interaction." evidence="11">
    <original>P</original>
    <variation>A</variation>
    <location>
        <position position="332"/>
    </location>
</feature>
<feature type="mutagenesis site" description="Loss of intramolecular interaction." evidence="11">
    <original>R</original>
    <variation>A</variation>
    <location>
        <position position="334"/>
    </location>
</feature>
<feature type="strand" evidence="20">
    <location>
        <begin position="7"/>
        <end position="16"/>
    </location>
</feature>
<feature type="strand" evidence="20">
    <location>
        <begin position="19"/>
        <end position="21"/>
    </location>
</feature>
<feature type="strand" evidence="20">
    <location>
        <begin position="23"/>
        <end position="30"/>
    </location>
</feature>
<feature type="strand" evidence="20">
    <location>
        <begin position="35"/>
        <end position="41"/>
    </location>
</feature>
<feature type="helix" evidence="20">
    <location>
        <begin position="42"/>
        <end position="55"/>
    </location>
</feature>
<feature type="helix" evidence="20">
    <location>
        <begin position="57"/>
        <end position="60"/>
    </location>
</feature>
<feature type="strand" evidence="20">
    <location>
        <begin position="61"/>
        <end position="63"/>
    </location>
</feature>
<feature type="helix" evidence="20">
    <location>
        <begin position="89"/>
        <end position="110"/>
    </location>
</feature>
<feature type="helix" evidence="20">
    <location>
        <begin position="112"/>
        <end position="116"/>
    </location>
</feature>
<feature type="helix" evidence="20">
    <location>
        <begin position="118"/>
        <end position="124"/>
    </location>
</feature>
<feature type="helix" evidence="20">
    <location>
        <begin position="128"/>
        <end position="131"/>
    </location>
</feature>
<feature type="strand" evidence="20">
    <location>
        <begin position="132"/>
        <end position="134"/>
    </location>
</feature>
<proteinExistence type="evidence at protein level"/>
<accession>Q8NFA2</accession>
<accession>Q86YM1</accession>
<accession>Q8NFA3</accession>
<accession>Q96B73</accession>
<keyword id="KW-0002">3D-structure</keyword>
<keyword id="KW-0025">Alternative splicing</keyword>
<keyword id="KW-1003">Cell membrane</keyword>
<keyword id="KW-0446">Lipid-binding</keyword>
<keyword id="KW-0472">Membrane</keyword>
<keyword id="KW-1267">Proteomics identification</keyword>
<keyword id="KW-1185">Reference proteome</keyword>
<keyword id="KW-0677">Repeat</keyword>
<keyword id="KW-0728">SH3 domain</keyword>
<sequence>MAGPRYPVSVQGAALVQIKRLQTFAFSVRWSDGSDTFVRRSWDEFRQLKKTLKETFPVEAGLLRRSDRVLPKLLGQASLDAPLLGRVGRTSRGLARLQLLETYSRRLLATAERVARSPTITGFFAPQPLDLEPALPPGSRVILPTPEEQPLSRAAGRLSIHSLEAQSLRCLQPFCTQDTRDRPFQAQAQESLDVLLRHPSGWWLVENEDRQTAWFPAPYLEEAAPGQGREGGPSLGSSGPQFCASRAYESSRADELSVPAGARVRVLETSDRGWWLCRYGDRAGLLPAVLLRPEGLGALLSGTGFRGGDDPAGEARGFPEPSQATAPPPTVPTRPSPGAIQSRCCTVTRRALERRPRRQGRPRGCVDSVPHPTTEQ</sequence>
<dbReference type="EMBL" id="AF539796">
    <property type="protein sequence ID" value="AAN75141.1"/>
    <property type="molecule type" value="mRNA"/>
</dbReference>
<dbReference type="EMBL" id="AY255768">
    <property type="protein sequence ID" value="AAP13479.1"/>
    <property type="molecule type" value="mRNA"/>
</dbReference>
<dbReference type="EMBL" id="AB097667">
    <property type="protein sequence ID" value="BAC76711.1"/>
    <property type="molecule type" value="mRNA"/>
</dbReference>
<dbReference type="EMBL" id="AF532983">
    <property type="protein sequence ID" value="AAM97925.1"/>
    <property type="molecule type" value="mRNA"/>
</dbReference>
<dbReference type="EMBL" id="AF532984">
    <property type="protein sequence ID" value="AAM97926.1"/>
    <property type="molecule type" value="mRNA"/>
</dbReference>
<dbReference type="EMBL" id="AF532985">
    <property type="protein sequence ID" value="AAM97927.1"/>
    <property type="molecule type" value="mRNA"/>
</dbReference>
<dbReference type="EMBL" id="AY191359">
    <property type="protein sequence ID" value="AAO38665.1"/>
    <property type="molecule type" value="mRNA"/>
</dbReference>
<dbReference type="EMBL" id="BC015917">
    <property type="protein sequence ID" value="AAH15917.1"/>
    <property type="molecule type" value="mRNA"/>
</dbReference>
<dbReference type="CCDS" id="CCDS10454.1">
    <molecule id="Q8NFA2-4"/>
</dbReference>
<dbReference type="CCDS" id="CCDS10455.1">
    <molecule id="Q8NFA2-3"/>
</dbReference>
<dbReference type="CCDS" id="CCDS42101.1">
    <molecule id="Q8NFA2-1"/>
</dbReference>
<dbReference type="CCDS" id="CCDS58406.1">
    <molecule id="Q8NFA2-2"/>
</dbReference>
<dbReference type="RefSeq" id="NP_001254650.1">
    <molecule id="Q8NFA2-2"/>
    <property type="nucleotide sequence ID" value="NM_001267721.2"/>
</dbReference>
<dbReference type="RefSeq" id="NP_653204.1">
    <molecule id="Q8NFA2-4"/>
    <property type="nucleotide sequence ID" value="NM_144603.4"/>
</dbReference>
<dbReference type="RefSeq" id="NP_751907.1">
    <molecule id="Q8NFA2-3"/>
    <property type="nucleotide sequence ID" value="NM_172167.3"/>
</dbReference>
<dbReference type="RefSeq" id="NP_751908.1">
    <molecule id="Q8NFA2-1"/>
    <property type="nucleotide sequence ID" value="NM_172168.3"/>
</dbReference>
<dbReference type="RefSeq" id="XP_005255156.1">
    <property type="nucleotide sequence ID" value="XM_005255099.4"/>
</dbReference>
<dbReference type="RefSeq" id="XP_016878416.1">
    <property type="nucleotide sequence ID" value="XM_017022927.1"/>
</dbReference>
<dbReference type="RefSeq" id="XP_016878417.1">
    <property type="nucleotide sequence ID" value="XM_017022928.1"/>
</dbReference>
<dbReference type="PDB" id="2L73">
    <property type="method" value="NMR"/>
    <property type="chains" value="A=1-149"/>
</dbReference>
<dbReference type="PDBsum" id="2L73"/>
<dbReference type="SMR" id="Q8NFA2"/>
<dbReference type="BioGRID" id="125848">
    <property type="interactions" value="24"/>
</dbReference>
<dbReference type="CORUM" id="Q8NFA2"/>
<dbReference type="FunCoup" id="Q8NFA2">
    <property type="interactions" value="311"/>
</dbReference>
<dbReference type="IntAct" id="Q8NFA2">
    <property type="interactions" value="32"/>
</dbReference>
<dbReference type="MINT" id="Q8NFA2"/>
<dbReference type="STRING" id="9606.ENSP00000380450"/>
<dbReference type="BindingDB" id="Q8NFA2"/>
<dbReference type="ChEMBL" id="CHEMBL5291596"/>
<dbReference type="DrugBank" id="DB05265">
    <property type="generic name" value="Ecabet"/>
</dbReference>
<dbReference type="GlyGen" id="Q8NFA2">
    <property type="glycosylation" value="2 sites"/>
</dbReference>
<dbReference type="iPTMnet" id="Q8NFA2"/>
<dbReference type="PhosphoSitePlus" id="Q8NFA2"/>
<dbReference type="BioMuta" id="NOXO1"/>
<dbReference type="DMDM" id="74751269"/>
<dbReference type="jPOST" id="Q8NFA2"/>
<dbReference type="MassIVE" id="Q8NFA2"/>
<dbReference type="PaxDb" id="9606-ENSP00000380450"/>
<dbReference type="PeptideAtlas" id="Q8NFA2"/>
<dbReference type="ProteomicsDB" id="73281">
    <molecule id="Q8NFA2-1"/>
</dbReference>
<dbReference type="ProteomicsDB" id="73282">
    <molecule id="Q8NFA2-2"/>
</dbReference>
<dbReference type="ProteomicsDB" id="73283">
    <molecule id="Q8NFA2-3"/>
</dbReference>
<dbReference type="ProteomicsDB" id="73284">
    <molecule id="Q8NFA2-4"/>
</dbReference>
<dbReference type="Antibodypedia" id="23401">
    <property type="antibodies" value="194 antibodies from 32 providers"/>
</dbReference>
<dbReference type="DNASU" id="124056"/>
<dbReference type="Ensembl" id="ENST00000354249.8">
    <molecule id="Q8NFA2-4"/>
    <property type="protein sequence ID" value="ENSP00000346195.4"/>
    <property type="gene ID" value="ENSG00000196408.12"/>
</dbReference>
<dbReference type="Ensembl" id="ENST00000356120.9">
    <molecule id="Q8NFA2-3"/>
    <property type="protein sequence ID" value="ENSP00000348435.4"/>
    <property type="gene ID" value="ENSG00000196408.12"/>
</dbReference>
<dbReference type="Ensembl" id="ENST00000397280.8">
    <molecule id="Q8NFA2-1"/>
    <property type="protein sequence ID" value="ENSP00000380450.4"/>
    <property type="gene ID" value="ENSG00000196408.12"/>
</dbReference>
<dbReference type="Ensembl" id="ENST00000566005.5">
    <molecule id="Q8NFA2-2"/>
    <property type="protein sequence ID" value="ENSP00000456800.1"/>
    <property type="gene ID" value="ENSG00000196408.12"/>
</dbReference>
<dbReference type="Ensembl" id="ENST00000709271.1">
    <molecule id="Q8NFA2-3"/>
    <property type="protein sequence ID" value="ENSP00000517590.1"/>
    <property type="gene ID" value="ENSG00000291939.1"/>
</dbReference>
<dbReference type="Ensembl" id="ENST00000709272.1">
    <molecule id="Q8NFA2-4"/>
    <property type="protein sequence ID" value="ENSP00000517591.1"/>
    <property type="gene ID" value="ENSG00000291939.1"/>
</dbReference>
<dbReference type="Ensembl" id="ENST00000709273.1">
    <molecule id="Q8NFA2-1"/>
    <property type="protein sequence ID" value="ENSP00000517592.1"/>
    <property type="gene ID" value="ENSG00000291939.1"/>
</dbReference>
<dbReference type="Ensembl" id="ENST00000709274.1">
    <molecule id="Q8NFA2-2"/>
    <property type="protein sequence ID" value="ENSP00000517593.1"/>
    <property type="gene ID" value="ENSG00000291939.1"/>
</dbReference>
<dbReference type="GeneID" id="124056"/>
<dbReference type="KEGG" id="hsa:124056"/>
<dbReference type="MANE-Select" id="ENST00000356120.9">
    <molecule id="Q8NFA2-3"/>
    <property type="protein sequence ID" value="ENSP00000348435.4"/>
    <property type="RefSeq nucleotide sequence ID" value="NM_172167.3"/>
    <property type="RefSeq protein sequence ID" value="NP_751907.1"/>
</dbReference>
<dbReference type="UCSC" id="uc002cnx.5">
    <molecule id="Q8NFA2-1"/>
    <property type="organism name" value="human"/>
</dbReference>
<dbReference type="AGR" id="HGNC:19404"/>
<dbReference type="CTD" id="124056"/>
<dbReference type="DisGeNET" id="124056"/>
<dbReference type="GeneCards" id="NOXO1"/>
<dbReference type="HGNC" id="HGNC:19404">
    <property type="gene designation" value="NOXO1"/>
</dbReference>
<dbReference type="HPA" id="ENSG00000196408">
    <property type="expression patterns" value="Tissue enhanced (brain, intestine, lymphoid tissue, testis)"/>
</dbReference>
<dbReference type="MIM" id="611256">
    <property type="type" value="gene"/>
</dbReference>
<dbReference type="neXtProt" id="NX_Q8NFA2"/>
<dbReference type="OpenTargets" id="ENSG00000196408"/>
<dbReference type="PharmGKB" id="PA134896072"/>
<dbReference type="VEuPathDB" id="HostDB:ENSG00000196408"/>
<dbReference type="eggNOG" id="ENOG502QW5I">
    <property type="taxonomic scope" value="Eukaryota"/>
</dbReference>
<dbReference type="GeneTree" id="ENSGT00940000158812"/>
<dbReference type="HOGENOM" id="CLU_030529_2_0_1"/>
<dbReference type="InParanoid" id="Q8NFA2"/>
<dbReference type="OMA" id="QQMAWFP"/>
<dbReference type="OrthoDB" id="10255964at2759"/>
<dbReference type="PAN-GO" id="Q8NFA2">
    <property type="GO annotations" value="3 GO annotations based on evolutionary models"/>
</dbReference>
<dbReference type="PhylomeDB" id="Q8NFA2"/>
<dbReference type="TreeFam" id="TF329347"/>
<dbReference type="PathwayCommons" id="Q8NFA2"/>
<dbReference type="Reactome" id="R-HSA-5668599">
    <property type="pathway name" value="RHO GTPases Activate NADPH Oxidases"/>
</dbReference>
<dbReference type="Reactome" id="R-HSA-9013149">
    <property type="pathway name" value="RAC1 GTPase cycle"/>
</dbReference>
<dbReference type="Reactome" id="R-HSA-9013423">
    <property type="pathway name" value="RAC3 GTPase cycle"/>
</dbReference>
<dbReference type="Reactome" id="R-HSA-9673324">
    <property type="pathway name" value="WNT5:FZD7-mediated leishmania damping"/>
</dbReference>
<dbReference type="SignaLink" id="Q8NFA2"/>
<dbReference type="SIGNOR" id="Q8NFA2"/>
<dbReference type="BioGRID-ORCS" id="124056">
    <property type="hits" value="11 hits in 1080 CRISPR screens"/>
</dbReference>
<dbReference type="EvolutionaryTrace" id="Q8NFA2"/>
<dbReference type="GeneWiki" id="NOXO1"/>
<dbReference type="GenomeRNAi" id="124056"/>
<dbReference type="Pharos" id="Q8NFA2">
    <property type="development level" value="Tbio"/>
</dbReference>
<dbReference type="PRO" id="PR:Q8NFA2"/>
<dbReference type="Proteomes" id="UP000005640">
    <property type="component" value="Chromosome 16"/>
</dbReference>
<dbReference type="RNAct" id="Q8NFA2">
    <property type="molecule type" value="protein"/>
</dbReference>
<dbReference type="Bgee" id="ENSG00000196408">
    <property type="expression patterns" value="Expressed in mucosa of transverse colon and 106 other cell types or tissues"/>
</dbReference>
<dbReference type="ExpressionAtlas" id="Q8NFA2">
    <property type="expression patterns" value="baseline and differential"/>
</dbReference>
<dbReference type="GO" id="GO:0005737">
    <property type="term" value="C:cytoplasm"/>
    <property type="evidence" value="ECO:0000318"/>
    <property type="project" value="GO_Central"/>
</dbReference>
<dbReference type="GO" id="GO:0043020">
    <property type="term" value="C:NADPH oxidase complex"/>
    <property type="evidence" value="ECO:0000314"/>
    <property type="project" value="BHF-UCL"/>
</dbReference>
<dbReference type="GO" id="GO:0005886">
    <property type="term" value="C:plasma membrane"/>
    <property type="evidence" value="ECO:0000304"/>
    <property type="project" value="Reactome"/>
</dbReference>
<dbReference type="GO" id="GO:0019899">
    <property type="term" value="F:enzyme binding"/>
    <property type="evidence" value="ECO:0000353"/>
    <property type="project" value="BHF-UCL"/>
</dbReference>
<dbReference type="GO" id="GO:0035091">
    <property type="term" value="F:phosphatidylinositol binding"/>
    <property type="evidence" value="ECO:0007669"/>
    <property type="project" value="InterPro"/>
</dbReference>
<dbReference type="GO" id="GO:0005543">
    <property type="term" value="F:phospholipid binding"/>
    <property type="evidence" value="ECO:0000304"/>
    <property type="project" value="BHF-UCL"/>
</dbReference>
<dbReference type="GO" id="GO:0016176">
    <property type="term" value="F:superoxide-generating NADPH oxidase activator activity"/>
    <property type="evidence" value="ECO:0000318"/>
    <property type="project" value="GO_Central"/>
</dbReference>
<dbReference type="GO" id="GO:0022617">
    <property type="term" value="P:extracellular matrix disassembly"/>
    <property type="evidence" value="ECO:0000315"/>
    <property type="project" value="UniProtKB"/>
</dbReference>
<dbReference type="GO" id="GO:0010310">
    <property type="term" value="P:regulation of hydrogen peroxide metabolic process"/>
    <property type="evidence" value="ECO:0000304"/>
    <property type="project" value="BHF-UCL"/>
</dbReference>
<dbReference type="GO" id="GO:0060263">
    <property type="term" value="P:regulation of respiratory burst"/>
    <property type="evidence" value="ECO:0000304"/>
    <property type="project" value="BHF-UCL"/>
</dbReference>
<dbReference type="GO" id="GO:0042554">
    <property type="term" value="P:superoxide anion generation"/>
    <property type="evidence" value="ECO:0000318"/>
    <property type="project" value="GO_Central"/>
</dbReference>
<dbReference type="CDD" id="cd12023">
    <property type="entry name" value="SH3_NoxO1_1"/>
    <property type="match status" value="1"/>
</dbReference>
<dbReference type="CDD" id="cd12024">
    <property type="entry name" value="SH3_NoxO1_2"/>
    <property type="match status" value="1"/>
</dbReference>
<dbReference type="FunFam" id="2.30.30.40:FF:000219">
    <property type="entry name" value="NADPH oxidase organizer 1"/>
    <property type="match status" value="1"/>
</dbReference>
<dbReference type="FunFam" id="2.30.30.40:FF:000238">
    <property type="entry name" value="NADPH oxidase organizer 1"/>
    <property type="match status" value="1"/>
</dbReference>
<dbReference type="FunFam" id="3.30.1520.10:FF:000040">
    <property type="entry name" value="NADPH oxidase organizer 1"/>
    <property type="match status" value="1"/>
</dbReference>
<dbReference type="Gene3D" id="3.30.1520.10">
    <property type="entry name" value="Phox-like domain"/>
    <property type="match status" value="1"/>
</dbReference>
<dbReference type="Gene3D" id="2.30.30.40">
    <property type="entry name" value="SH3 Domains"/>
    <property type="match status" value="2"/>
</dbReference>
<dbReference type="InterPro" id="IPR051228">
    <property type="entry name" value="NADPH_Oxidase/PX-Domain"/>
</dbReference>
<dbReference type="InterPro" id="IPR035758">
    <property type="entry name" value="NoxO1_SH3_2"/>
</dbReference>
<dbReference type="InterPro" id="IPR001683">
    <property type="entry name" value="PX_dom"/>
</dbReference>
<dbReference type="InterPro" id="IPR036871">
    <property type="entry name" value="PX_dom_sf"/>
</dbReference>
<dbReference type="InterPro" id="IPR036028">
    <property type="entry name" value="SH3-like_dom_sf"/>
</dbReference>
<dbReference type="InterPro" id="IPR001452">
    <property type="entry name" value="SH3_domain"/>
</dbReference>
<dbReference type="PANTHER" id="PTHR15706:SF10">
    <property type="entry name" value="NADPH OXIDASE ORGANIZER 1"/>
    <property type="match status" value="1"/>
</dbReference>
<dbReference type="PANTHER" id="PTHR15706">
    <property type="entry name" value="SH3 MULTIPLE DOMAIN"/>
    <property type="match status" value="1"/>
</dbReference>
<dbReference type="Pfam" id="PF00018">
    <property type="entry name" value="SH3_1"/>
    <property type="match status" value="1"/>
</dbReference>
<dbReference type="SMART" id="SM00326">
    <property type="entry name" value="SH3"/>
    <property type="match status" value="2"/>
</dbReference>
<dbReference type="SUPFAM" id="SSF64268">
    <property type="entry name" value="PX domain"/>
    <property type="match status" value="1"/>
</dbReference>
<dbReference type="SUPFAM" id="SSF50044">
    <property type="entry name" value="SH3-domain"/>
    <property type="match status" value="2"/>
</dbReference>
<dbReference type="PROSITE" id="PS50195">
    <property type="entry name" value="PX"/>
    <property type="match status" value="1"/>
</dbReference>
<dbReference type="PROSITE" id="PS50002">
    <property type="entry name" value="SH3"/>
    <property type="match status" value="2"/>
</dbReference>